<accession>A6T170</accession>
<keyword id="KW-0963">Cytoplasm</keyword>
<keyword id="KW-0448">Lipopolysaccharide biosynthesis</keyword>
<keyword id="KW-0548">Nucleotidyltransferase</keyword>
<keyword id="KW-0808">Transferase</keyword>
<protein>
    <recommendedName>
        <fullName evidence="1">3-deoxy-manno-octulosonate cytidylyltransferase</fullName>
        <ecNumber evidence="1">2.7.7.38</ecNumber>
    </recommendedName>
    <alternativeName>
        <fullName evidence="1">CMP-2-keto-3-deoxyoctulosonic acid synthase</fullName>
        <shortName evidence="1">CKS</shortName>
        <shortName evidence="1">CMP-KDO synthase</shortName>
    </alternativeName>
</protein>
<evidence type="ECO:0000255" key="1">
    <source>
        <dbReference type="HAMAP-Rule" id="MF_00057"/>
    </source>
</evidence>
<feature type="chain" id="PRO_1000091880" description="3-deoxy-manno-octulosonate cytidylyltransferase">
    <location>
        <begin position="1"/>
        <end position="250"/>
    </location>
</feature>
<sequence>MSFTVIIPARLASTRLPNKPLADLGGKPMIVRVAERAMQSGAAQVIVATDHADIFAACVQHKVAVQMTRADHPSGTDRIAEVAALIGLPDEAVVVNVQGDEPLIDPSLIAATATLISRDVPMATAAHAISEIEEVFNPNVVKVVLDKSGRALYFSRATIPWHRDGFAVSKDAIPAGYAPLRHIGLYAYRNAFLQEYPQLSVSPLEQLEALEQLRVLWHGVPIAVHVTPHAPVTGVDTPEDLQRVRQFFAQ</sequence>
<dbReference type="EC" id="2.7.7.38" evidence="1"/>
<dbReference type="EMBL" id="CP000269">
    <property type="protein sequence ID" value="ABR88825.1"/>
    <property type="molecule type" value="Genomic_DNA"/>
</dbReference>
<dbReference type="RefSeq" id="WP_012080429.1">
    <property type="nucleotide sequence ID" value="NC_009659.1"/>
</dbReference>
<dbReference type="SMR" id="A6T170"/>
<dbReference type="STRING" id="375286.mma_2577"/>
<dbReference type="KEGG" id="mms:mma_2577"/>
<dbReference type="eggNOG" id="COG1212">
    <property type="taxonomic scope" value="Bacteria"/>
</dbReference>
<dbReference type="HOGENOM" id="CLU_065038_1_0_4"/>
<dbReference type="OrthoDB" id="9815559at2"/>
<dbReference type="UniPathway" id="UPA00030"/>
<dbReference type="UniPathway" id="UPA00358">
    <property type="reaction ID" value="UER00476"/>
</dbReference>
<dbReference type="Proteomes" id="UP000006388">
    <property type="component" value="Chromosome"/>
</dbReference>
<dbReference type="GO" id="GO:0005829">
    <property type="term" value="C:cytosol"/>
    <property type="evidence" value="ECO:0007669"/>
    <property type="project" value="TreeGrafter"/>
</dbReference>
<dbReference type="GO" id="GO:0008690">
    <property type="term" value="F:3-deoxy-manno-octulosonate cytidylyltransferase activity"/>
    <property type="evidence" value="ECO:0007669"/>
    <property type="project" value="UniProtKB-UniRule"/>
</dbReference>
<dbReference type="GO" id="GO:0033468">
    <property type="term" value="P:CMP-keto-3-deoxy-D-manno-octulosonic acid biosynthetic process"/>
    <property type="evidence" value="ECO:0007669"/>
    <property type="project" value="UniProtKB-UniRule"/>
</dbReference>
<dbReference type="GO" id="GO:0009103">
    <property type="term" value="P:lipopolysaccharide biosynthetic process"/>
    <property type="evidence" value="ECO:0007669"/>
    <property type="project" value="UniProtKB-UniRule"/>
</dbReference>
<dbReference type="CDD" id="cd02517">
    <property type="entry name" value="CMP-KDO-Synthetase"/>
    <property type="match status" value="1"/>
</dbReference>
<dbReference type="FunFam" id="3.90.550.10:FF:000011">
    <property type="entry name" value="3-deoxy-manno-octulosonate cytidylyltransferase"/>
    <property type="match status" value="1"/>
</dbReference>
<dbReference type="Gene3D" id="3.90.550.10">
    <property type="entry name" value="Spore Coat Polysaccharide Biosynthesis Protein SpsA, Chain A"/>
    <property type="match status" value="1"/>
</dbReference>
<dbReference type="HAMAP" id="MF_00057">
    <property type="entry name" value="KdsB"/>
    <property type="match status" value="1"/>
</dbReference>
<dbReference type="InterPro" id="IPR003329">
    <property type="entry name" value="Cytidylyl_trans"/>
</dbReference>
<dbReference type="InterPro" id="IPR004528">
    <property type="entry name" value="KdsB"/>
</dbReference>
<dbReference type="InterPro" id="IPR029044">
    <property type="entry name" value="Nucleotide-diphossugar_trans"/>
</dbReference>
<dbReference type="NCBIfam" id="TIGR00466">
    <property type="entry name" value="kdsB"/>
    <property type="match status" value="1"/>
</dbReference>
<dbReference type="NCBIfam" id="NF003952">
    <property type="entry name" value="PRK05450.1-5"/>
    <property type="match status" value="1"/>
</dbReference>
<dbReference type="NCBIfam" id="NF009905">
    <property type="entry name" value="PRK13368.1"/>
    <property type="match status" value="1"/>
</dbReference>
<dbReference type="PANTHER" id="PTHR42866">
    <property type="entry name" value="3-DEOXY-MANNO-OCTULOSONATE CYTIDYLYLTRANSFERASE"/>
    <property type="match status" value="1"/>
</dbReference>
<dbReference type="PANTHER" id="PTHR42866:SF2">
    <property type="entry name" value="3-DEOXY-MANNO-OCTULOSONATE CYTIDYLYLTRANSFERASE, MITOCHONDRIAL"/>
    <property type="match status" value="1"/>
</dbReference>
<dbReference type="Pfam" id="PF02348">
    <property type="entry name" value="CTP_transf_3"/>
    <property type="match status" value="1"/>
</dbReference>
<dbReference type="SUPFAM" id="SSF53448">
    <property type="entry name" value="Nucleotide-diphospho-sugar transferases"/>
    <property type="match status" value="1"/>
</dbReference>
<name>KDSB_JANMA</name>
<gene>
    <name evidence="1" type="primary">kdsB</name>
    <name type="ordered locus">mma_2577</name>
</gene>
<reference key="1">
    <citation type="journal article" date="2007" name="PLoS Genet.">
        <title>Genome analysis of Minibacterium massiliensis highlights the convergent evolution of water-living bacteria.</title>
        <authorList>
            <person name="Audic S."/>
            <person name="Robert C."/>
            <person name="Campagna B."/>
            <person name="Parinello H."/>
            <person name="Claverie J.-M."/>
            <person name="Raoult D."/>
            <person name="Drancourt M."/>
        </authorList>
    </citation>
    <scope>NUCLEOTIDE SEQUENCE [LARGE SCALE GENOMIC DNA]</scope>
    <source>
        <strain>Marseille</strain>
    </source>
</reference>
<organism>
    <name type="scientific">Janthinobacterium sp. (strain Marseille)</name>
    <name type="common">Minibacterium massiliensis</name>
    <dbReference type="NCBI Taxonomy" id="375286"/>
    <lineage>
        <taxon>Bacteria</taxon>
        <taxon>Pseudomonadati</taxon>
        <taxon>Pseudomonadota</taxon>
        <taxon>Betaproteobacteria</taxon>
        <taxon>Burkholderiales</taxon>
        <taxon>Oxalobacteraceae</taxon>
        <taxon>Janthinobacterium</taxon>
    </lineage>
</organism>
<proteinExistence type="inferred from homology"/>
<comment type="function">
    <text evidence="1">Activates KDO (a required 8-carbon sugar) for incorporation into bacterial lipopolysaccharide in Gram-negative bacteria.</text>
</comment>
<comment type="catalytic activity">
    <reaction evidence="1">
        <text>3-deoxy-alpha-D-manno-oct-2-ulosonate + CTP = CMP-3-deoxy-beta-D-manno-octulosonate + diphosphate</text>
        <dbReference type="Rhea" id="RHEA:23448"/>
        <dbReference type="ChEBI" id="CHEBI:33019"/>
        <dbReference type="ChEBI" id="CHEBI:37563"/>
        <dbReference type="ChEBI" id="CHEBI:85986"/>
        <dbReference type="ChEBI" id="CHEBI:85987"/>
        <dbReference type="EC" id="2.7.7.38"/>
    </reaction>
</comment>
<comment type="pathway">
    <text evidence="1">Nucleotide-sugar biosynthesis; CMP-3-deoxy-D-manno-octulosonate biosynthesis; CMP-3-deoxy-D-manno-octulosonate from 3-deoxy-D-manno-octulosonate and CTP: step 1/1.</text>
</comment>
<comment type="pathway">
    <text evidence="1">Bacterial outer membrane biogenesis; lipopolysaccharide biosynthesis.</text>
</comment>
<comment type="subcellular location">
    <subcellularLocation>
        <location evidence="1">Cytoplasm</location>
    </subcellularLocation>
</comment>
<comment type="similarity">
    <text evidence="1">Belongs to the KdsB family.</text>
</comment>